<name>FTSQ_NITMU</name>
<feature type="chain" id="PRO_0000414683" description="Cell division protein FtsQ">
    <location>
        <begin position="1"/>
        <end position="236"/>
    </location>
</feature>
<feature type="topological domain" description="Cytoplasmic" evidence="1">
    <location>
        <begin position="1"/>
        <end position="14"/>
    </location>
</feature>
<feature type="transmembrane region" description="Helical" evidence="1">
    <location>
        <begin position="15"/>
        <end position="37"/>
    </location>
</feature>
<feature type="topological domain" description="Periplasmic" evidence="1">
    <location>
        <begin position="38"/>
        <end position="236"/>
    </location>
</feature>
<feature type="domain" description="POTRA" evidence="2">
    <location>
        <begin position="37"/>
        <end position="111"/>
    </location>
</feature>
<sequence length="236" mass="27222">MWDNHQALNQVADWLFTLAGLTTIYLMVQWTIHLPLLPLKEVHIRSNSGSGELRHVTREQVSDVVHREVGGNFLTIDLEAARHTFEKLAWVRVASVRRIWPNGLDVVVEEHVPLAHWGDSALVNRQGEIFNATSDEPMPIFEGPRESVREMVHQHAVFTKLLQPLKQDVEQVELSPRRAWRVRLGNGTILELGREHLEKRLERYVQTHDLVVARLNQRLSYVDLRYVSGFAARGTR</sequence>
<dbReference type="EMBL" id="CP000103">
    <property type="protein sequence ID" value="ABB75779.1"/>
    <property type="molecule type" value="Genomic_DNA"/>
</dbReference>
<dbReference type="RefSeq" id="WP_011381778.1">
    <property type="nucleotide sequence ID" value="NC_007614.1"/>
</dbReference>
<dbReference type="SMR" id="Q2Y642"/>
<dbReference type="STRING" id="323848.Nmul_A2490"/>
<dbReference type="KEGG" id="nmu:Nmul_A2490"/>
<dbReference type="eggNOG" id="COG1589">
    <property type="taxonomic scope" value="Bacteria"/>
</dbReference>
<dbReference type="HOGENOM" id="CLU_064041_0_0_4"/>
<dbReference type="OrthoDB" id="9790370at2"/>
<dbReference type="Proteomes" id="UP000002718">
    <property type="component" value="Chromosome"/>
</dbReference>
<dbReference type="GO" id="GO:0032153">
    <property type="term" value="C:cell division site"/>
    <property type="evidence" value="ECO:0007669"/>
    <property type="project" value="UniProtKB-UniRule"/>
</dbReference>
<dbReference type="GO" id="GO:0005886">
    <property type="term" value="C:plasma membrane"/>
    <property type="evidence" value="ECO:0007669"/>
    <property type="project" value="UniProtKB-SubCell"/>
</dbReference>
<dbReference type="GO" id="GO:0090529">
    <property type="term" value="P:cell septum assembly"/>
    <property type="evidence" value="ECO:0007669"/>
    <property type="project" value="InterPro"/>
</dbReference>
<dbReference type="GO" id="GO:0043093">
    <property type="term" value="P:FtsZ-dependent cytokinesis"/>
    <property type="evidence" value="ECO:0007669"/>
    <property type="project" value="UniProtKB-UniRule"/>
</dbReference>
<dbReference type="Gene3D" id="3.40.50.11690">
    <property type="entry name" value="Cell division protein FtsQ/DivIB"/>
    <property type="match status" value="1"/>
</dbReference>
<dbReference type="Gene3D" id="3.10.20.310">
    <property type="entry name" value="membrane protein fhac"/>
    <property type="match status" value="1"/>
</dbReference>
<dbReference type="HAMAP" id="MF_00911">
    <property type="entry name" value="FtsQ_subfam"/>
    <property type="match status" value="1"/>
</dbReference>
<dbReference type="InterPro" id="IPR005548">
    <property type="entry name" value="Cell_div_FtsQ/DivIB_C"/>
</dbReference>
<dbReference type="InterPro" id="IPR026579">
    <property type="entry name" value="FtsQ"/>
</dbReference>
<dbReference type="InterPro" id="IPR045335">
    <property type="entry name" value="FtsQ_C_sf"/>
</dbReference>
<dbReference type="InterPro" id="IPR034746">
    <property type="entry name" value="POTRA"/>
</dbReference>
<dbReference type="InterPro" id="IPR013685">
    <property type="entry name" value="POTRA_FtsQ_type"/>
</dbReference>
<dbReference type="PANTHER" id="PTHR35851">
    <property type="entry name" value="CELL DIVISION PROTEIN FTSQ"/>
    <property type="match status" value="1"/>
</dbReference>
<dbReference type="PANTHER" id="PTHR35851:SF1">
    <property type="entry name" value="CELL DIVISION PROTEIN FTSQ"/>
    <property type="match status" value="1"/>
</dbReference>
<dbReference type="Pfam" id="PF03799">
    <property type="entry name" value="FtsQ_DivIB_C"/>
    <property type="match status" value="1"/>
</dbReference>
<dbReference type="Pfam" id="PF08478">
    <property type="entry name" value="POTRA_1"/>
    <property type="match status" value="1"/>
</dbReference>
<dbReference type="PROSITE" id="PS51779">
    <property type="entry name" value="POTRA"/>
    <property type="match status" value="1"/>
</dbReference>
<organism>
    <name type="scientific">Nitrosospira multiformis (strain ATCC 25196 / NCIMB 11849 / C 71)</name>
    <dbReference type="NCBI Taxonomy" id="323848"/>
    <lineage>
        <taxon>Bacteria</taxon>
        <taxon>Pseudomonadati</taxon>
        <taxon>Pseudomonadota</taxon>
        <taxon>Betaproteobacteria</taxon>
        <taxon>Nitrosomonadales</taxon>
        <taxon>Nitrosomonadaceae</taxon>
        <taxon>Nitrosospira</taxon>
    </lineage>
</organism>
<proteinExistence type="inferred from homology"/>
<reference key="1">
    <citation type="submission" date="2005-08" db="EMBL/GenBank/DDBJ databases">
        <title>Complete sequence of chromosome 1 of Nitrosospira multiformis ATCC 25196.</title>
        <authorList>
            <person name="Copeland A."/>
            <person name="Lucas S."/>
            <person name="Lapidus A."/>
            <person name="Barry K."/>
            <person name="Detter J.C."/>
            <person name="Glavina T."/>
            <person name="Hammon N."/>
            <person name="Israni S."/>
            <person name="Pitluck S."/>
            <person name="Chain P."/>
            <person name="Malfatti S."/>
            <person name="Shin M."/>
            <person name="Vergez L."/>
            <person name="Schmutz J."/>
            <person name="Larimer F."/>
            <person name="Land M."/>
            <person name="Hauser L."/>
            <person name="Kyrpides N."/>
            <person name="Lykidis A."/>
            <person name="Richardson P."/>
        </authorList>
    </citation>
    <scope>NUCLEOTIDE SEQUENCE [LARGE SCALE GENOMIC DNA]</scope>
    <source>
        <strain>ATCC 25196 / NCIMB 11849 / C 71</strain>
    </source>
</reference>
<evidence type="ECO:0000255" key="1">
    <source>
        <dbReference type="HAMAP-Rule" id="MF_00911"/>
    </source>
</evidence>
<evidence type="ECO:0000255" key="2">
    <source>
        <dbReference type="PROSITE-ProRule" id="PRU01115"/>
    </source>
</evidence>
<accession>Q2Y642</accession>
<protein>
    <recommendedName>
        <fullName evidence="1">Cell division protein FtsQ</fullName>
    </recommendedName>
</protein>
<comment type="function">
    <text evidence="1">Essential cell division protein. May link together the upstream cell division proteins, which are predominantly cytoplasmic, with the downstream cell division proteins, which are predominantly periplasmic. May control correct divisome assembly.</text>
</comment>
<comment type="subunit">
    <text evidence="1">Part of a complex composed of FtsB, FtsL and FtsQ.</text>
</comment>
<comment type="subcellular location">
    <subcellularLocation>
        <location evidence="1">Cell inner membrane</location>
        <topology evidence="1">Single-pass type II membrane protein</topology>
    </subcellularLocation>
    <text evidence="1">Localizes to the division septum.</text>
</comment>
<comment type="similarity">
    <text evidence="1">Belongs to the FtsQ/DivIB family. FtsQ subfamily.</text>
</comment>
<keyword id="KW-0131">Cell cycle</keyword>
<keyword id="KW-0132">Cell division</keyword>
<keyword id="KW-0997">Cell inner membrane</keyword>
<keyword id="KW-1003">Cell membrane</keyword>
<keyword id="KW-0472">Membrane</keyword>
<keyword id="KW-1185">Reference proteome</keyword>
<keyword id="KW-0812">Transmembrane</keyword>
<keyword id="KW-1133">Transmembrane helix</keyword>
<gene>
    <name evidence="1" type="primary">ftsQ</name>
    <name type="ordered locus">Nmul_A2490</name>
</gene>